<sequence>MTHDNKLQVEAIKRGTVIDHIPAQIGFKLLSLFKLTETDQRITIGLNLPSGEMGRKDLIKIENTFLSEDQVDQLALYAPQATVNRIDNYEVVGKSRPSLPERIDNVLVCPNSNCISHAEPVSSSFAVRKRANDIALKCKYCEKEFSHNVVLAN</sequence>
<comment type="function">
    <text evidence="1">Involved in allosteric regulation of aspartate carbamoyltransferase.</text>
</comment>
<comment type="cofactor">
    <cofactor evidence="1">
        <name>Zn(2+)</name>
        <dbReference type="ChEBI" id="CHEBI:29105"/>
    </cofactor>
    <text evidence="1">Binds 1 zinc ion per subunit.</text>
</comment>
<comment type="subunit">
    <text evidence="1">Contains catalytic and regulatory chains.</text>
</comment>
<comment type="similarity">
    <text evidence="1">Belongs to the PyrI family.</text>
</comment>
<keyword id="KW-0479">Metal-binding</keyword>
<keyword id="KW-0665">Pyrimidine biosynthesis</keyword>
<keyword id="KW-0862">Zinc</keyword>
<organism>
    <name type="scientific">Escherichia coli (strain ATCC 8739 / DSM 1576 / NBRC 3972 / NCIMB 8545 / WDCM 00012 / Crooks)</name>
    <dbReference type="NCBI Taxonomy" id="481805"/>
    <lineage>
        <taxon>Bacteria</taxon>
        <taxon>Pseudomonadati</taxon>
        <taxon>Pseudomonadota</taxon>
        <taxon>Gammaproteobacteria</taxon>
        <taxon>Enterobacterales</taxon>
        <taxon>Enterobacteriaceae</taxon>
        <taxon>Escherichia</taxon>
    </lineage>
</organism>
<reference key="1">
    <citation type="submission" date="2008-02" db="EMBL/GenBank/DDBJ databases">
        <title>Complete sequence of Escherichia coli C str. ATCC 8739.</title>
        <authorList>
            <person name="Copeland A."/>
            <person name="Lucas S."/>
            <person name="Lapidus A."/>
            <person name="Glavina del Rio T."/>
            <person name="Dalin E."/>
            <person name="Tice H."/>
            <person name="Bruce D."/>
            <person name="Goodwin L."/>
            <person name="Pitluck S."/>
            <person name="Kiss H."/>
            <person name="Brettin T."/>
            <person name="Detter J.C."/>
            <person name="Han C."/>
            <person name="Kuske C.R."/>
            <person name="Schmutz J."/>
            <person name="Larimer F."/>
            <person name="Land M."/>
            <person name="Hauser L."/>
            <person name="Kyrpides N."/>
            <person name="Mikhailova N."/>
            <person name="Ingram L."/>
            <person name="Richardson P."/>
        </authorList>
    </citation>
    <scope>NUCLEOTIDE SEQUENCE [LARGE SCALE GENOMIC DNA]</scope>
    <source>
        <strain>ATCC 8739 / DSM 1576 / NBRC 3972 / NCIMB 8545 / WDCM 00012 / Crooks</strain>
    </source>
</reference>
<dbReference type="EMBL" id="CP000946">
    <property type="protein sequence ID" value="ACA79372.1"/>
    <property type="molecule type" value="Genomic_DNA"/>
</dbReference>
<dbReference type="RefSeq" id="WP_000148581.1">
    <property type="nucleotide sequence ID" value="NZ_MTFT01000012.1"/>
</dbReference>
<dbReference type="SMR" id="B1ISW1"/>
<dbReference type="GeneID" id="93777580"/>
<dbReference type="KEGG" id="ecl:EcolC_3767"/>
<dbReference type="HOGENOM" id="CLU_128576_0_0_6"/>
<dbReference type="GO" id="GO:0009347">
    <property type="term" value="C:aspartate carbamoyltransferase complex"/>
    <property type="evidence" value="ECO:0007669"/>
    <property type="project" value="InterPro"/>
</dbReference>
<dbReference type="GO" id="GO:0046872">
    <property type="term" value="F:metal ion binding"/>
    <property type="evidence" value="ECO:0007669"/>
    <property type="project" value="UniProtKB-KW"/>
</dbReference>
<dbReference type="GO" id="GO:0006207">
    <property type="term" value="P:'de novo' pyrimidine nucleobase biosynthetic process"/>
    <property type="evidence" value="ECO:0007669"/>
    <property type="project" value="InterPro"/>
</dbReference>
<dbReference type="GO" id="GO:0006221">
    <property type="term" value="P:pyrimidine nucleotide biosynthetic process"/>
    <property type="evidence" value="ECO:0007669"/>
    <property type="project" value="UniProtKB-UniRule"/>
</dbReference>
<dbReference type="FunFam" id="2.30.30.20:FF:000001">
    <property type="entry name" value="Aspartate carbamoyltransferase regulatory chain"/>
    <property type="match status" value="1"/>
</dbReference>
<dbReference type="FunFam" id="3.30.70.140:FF:000001">
    <property type="entry name" value="Aspartate carbamoyltransferase regulatory chain"/>
    <property type="match status" value="1"/>
</dbReference>
<dbReference type="Gene3D" id="2.30.30.20">
    <property type="entry name" value="Aspartate carbamoyltransferase regulatory subunit, C-terminal domain"/>
    <property type="match status" value="1"/>
</dbReference>
<dbReference type="Gene3D" id="3.30.70.140">
    <property type="entry name" value="Aspartate carbamoyltransferase regulatory subunit, N-terminal domain"/>
    <property type="match status" value="1"/>
</dbReference>
<dbReference type="HAMAP" id="MF_00002">
    <property type="entry name" value="Asp_carb_tr_reg"/>
    <property type="match status" value="1"/>
</dbReference>
<dbReference type="InterPro" id="IPR020545">
    <property type="entry name" value="Asp_carbamoyltransf_reg_N"/>
</dbReference>
<dbReference type="InterPro" id="IPR002801">
    <property type="entry name" value="Asp_carbamoylTrfase_reg"/>
</dbReference>
<dbReference type="InterPro" id="IPR020542">
    <property type="entry name" value="Asp_carbamoyltrfase_reg_C"/>
</dbReference>
<dbReference type="InterPro" id="IPR036792">
    <property type="entry name" value="Asp_carbatrfase_reg_C_sf"/>
</dbReference>
<dbReference type="InterPro" id="IPR036793">
    <property type="entry name" value="Asp_carbatrfase_reg_N_sf"/>
</dbReference>
<dbReference type="NCBIfam" id="TIGR00240">
    <property type="entry name" value="ATCase_reg"/>
    <property type="match status" value="1"/>
</dbReference>
<dbReference type="PANTHER" id="PTHR35805">
    <property type="entry name" value="ASPARTATE CARBAMOYLTRANSFERASE REGULATORY CHAIN"/>
    <property type="match status" value="1"/>
</dbReference>
<dbReference type="PANTHER" id="PTHR35805:SF1">
    <property type="entry name" value="ASPARTATE CARBAMOYLTRANSFERASE REGULATORY CHAIN"/>
    <property type="match status" value="1"/>
</dbReference>
<dbReference type="Pfam" id="PF01948">
    <property type="entry name" value="PyrI"/>
    <property type="match status" value="1"/>
</dbReference>
<dbReference type="Pfam" id="PF02748">
    <property type="entry name" value="PyrI_C"/>
    <property type="match status" value="1"/>
</dbReference>
<dbReference type="SUPFAM" id="SSF57825">
    <property type="entry name" value="Aspartate carbamoyltransferase, Regulatory-chain, C-terminal domain"/>
    <property type="match status" value="1"/>
</dbReference>
<dbReference type="SUPFAM" id="SSF54893">
    <property type="entry name" value="Aspartate carbamoyltransferase, Regulatory-chain, N-terminal domain"/>
    <property type="match status" value="1"/>
</dbReference>
<feature type="chain" id="PRO_1000073745" description="Aspartate carbamoyltransferase regulatory chain">
    <location>
        <begin position="1"/>
        <end position="153"/>
    </location>
</feature>
<feature type="binding site" evidence="1">
    <location>
        <position position="109"/>
    </location>
    <ligand>
        <name>Zn(2+)</name>
        <dbReference type="ChEBI" id="CHEBI:29105"/>
    </ligand>
</feature>
<feature type="binding site" evidence="1">
    <location>
        <position position="114"/>
    </location>
    <ligand>
        <name>Zn(2+)</name>
        <dbReference type="ChEBI" id="CHEBI:29105"/>
    </ligand>
</feature>
<feature type="binding site" evidence="1">
    <location>
        <position position="138"/>
    </location>
    <ligand>
        <name>Zn(2+)</name>
        <dbReference type="ChEBI" id="CHEBI:29105"/>
    </ligand>
</feature>
<feature type="binding site" evidence="1">
    <location>
        <position position="141"/>
    </location>
    <ligand>
        <name>Zn(2+)</name>
        <dbReference type="ChEBI" id="CHEBI:29105"/>
    </ligand>
</feature>
<accession>B1ISW1</accession>
<protein>
    <recommendedName>
        <fullName evidence="1">Aspartate carbamoyltransferase regulatory chain</fullName>
    </recommendedName>
</protein>
<gene>
    <name evidence="1" type="primary">pyrI</name>
    <name type="ordered locus">EcolC_3767</name>
</gene>
<evidence type="ECO:0000255" key="1">
    <source>
        <dbReference type="HAMAP-Rule" id="MF_00002"/>
    </source>
</evidence>
<proteinExistence type="inferred from homology"/>
<name>PYRI_ECOLC</name>